<protein>
    <recommendedName>
        <fullName>GDNF-inducible zinc finger protein 1</fullName>
    </recommendedName>
    <alternativeName>
        <fullName>Zinc finger protein 336</fullName>
    </alternativeName>
</protein>
<dbReference type="EMBL" id="CH474026">
    <property type="protein sequence ID" value="EDL95094.1"/>
    <property type="molecule type" value="Genomic_DNA"/>
</dbReference>
<dbReference type="EMBL" id="CH474026">
    <property type="protein sequence ID" value="EDL95095.1"/>
    <property type="molecule type" value="Genomic_DNA"/>
</dbReference>
<dbReference type="RefSeq" id="NP_001101258.1">
    <property type="nucleotide sequence ID" value="NM_001107788.2"/>
</dbReference>
<dbReference type="RefSeq" id="NP_001420967.1">
    <property type="nucleotide sequence ID" value="NM_001434038.1"/>
</dbReference>
<dbReference type="RefSeq" id="NP_001420968.1">
    <property type="nucleotide sequence ID" value="NM_001434039.1"/>
</dbReference>
<dbReference type="RefSeq" id="XP_006235215.1">
    <property type="nucleotide sequence ID" value="XM_006235153.3"/>
</dbReference>
<dbReference type="RefSeq" id="XP_006235216.1">
    <property type="nucleotide sequence ID" value="XM_006235154.2"/>
</dbReference>
<dbReference type="RefSeq" id="XP_008760496.1">
    <property type="nucleotide sequence ID" value="XM_008762274.2"/>
</dbReference>
<dbReference type="RefSeq" id="XP_017447260.1">
    <property type="nucleotide sequence ID" value="XM_017591771.1"/>
</dbReference>
<dbReference type="RefSeq" id="XP_063139881.1">
    <property type="nucleotide sequence ID" value="XM_063283811.1"/>
</dbReference>
<dbReference type="SMR" id="D3ZUU2"/>
<dbReference type="FunCoup" id="D3ZUU2">
    <property type="interactions" value="1404"/>
</dbReference>
<dbReference type="STRING" id="10116.ENSRNOP00000006287"/>
<dbReference type="GlyGen" id="D3ZUU2">
    <property type="glycosylation" value="1 site"/>
</dbReference>
<dbReference type="iPTMnet" id="D3ZUU2"/>
<dbReference type="PhosphoSitePlus" id="D3ZUU2"/>
<dbReference type="PaxDb" id="10116-ENSRNOP00000006287"/>
<dbReference type="PeptideAtlas" id="D3ZUU2"/>
<dbReference type="Ensembl" id="ENSRNOT00000006287.4">
    <property type="protein sequence ID" value="ENSRNOP00000006287.3"/>
    <property type="gene ID" value="ENSRNOG00000004735.4"/>
</dbReference>
<dbReference type="GeneID" id="311508"/>
<dbReference type="KEGG" id="rno:311508"/>
<dbReference type="UCSC" id="RGD:1562321">
    <property type="organism name" value="rat"/>
</dbReference>
<dbReference type="AGR" id="RGD:1562321"/>
<dbReference type="CTD" id="64412"/>
<dbReference type="RGD" id="1562321">
    <property type="gene designation" value="Gzf1"/>
</dbReference>
<dbReference type="eggNOG" id="KOG1721">
    <property type="taxonomic scope" value="Eukaryota"/>
</dbReference>
<dbReference type="GeneTree" id="ENSGT00870000136554"/>
<dbReference type="HOGENOM" id="CLU_018348_1_0_1"/>
<dbReference type="InParanoid" id="D3ZUU2"/>
<dbReference type="OMA" id="PFMCESC"/>
<dbReference type="OrthoDB" id="1095242at2759"/>
<dbReference type="PhylomeDB" id="D3ZUU2"/>
<dbReference type="TreeFam" id="TF350965"/>
<dbReference type="PRO" id="PR:D3ZUU2"/>
<dbReference type="Proteomes" id="UP000002494">
    <property type="component" value="Chromosome 3"/>
</dbReference>
<dbReference type="Proteomes" id="UP000234681">
    <property type="component" value="Chromosome 3"/>
</dbReference>
<dbReference type="Bgee" id="ENSRNOG00000004735">
    <property type="expression patterns" value="Expressed in skeletal muscle tissue and 20 other cell types or tissues"/>
</dbReference>
<dbReference type="GO" id="GO:0005737">
    <property type="term" value="C:cytoplasm"/>
    <property type="evidence" value="ECO:0007669"/>
    <property type="project" value="UniProtKB-SubCell"/>
</dbReference>
<dbReference type="GO" id="GO:0005730">
    <property type="term" value="C:nucleolus"/>
    <property type="evidence" value="ECO:0007669"/>
    <property type="project" value="UniProtKB-SubCell"/>
</dbReference>
<dbReference type="GO" id="GO:0005654">
    <property type="term" value="C:nucleoplasm"/>
    <property type="evidence" value="ECO:0007669"/>
    <property type="project" value="UniProtKB-SubCell"/>
</dbReference>
<dbReference type="GO" id="GO:0005634">
    <property type="term" value="C:nucleus"/>
    <property type="evidence" value="ECO:0000266"/>
    <property type="project" value="RGD"/>
</dbReference>
<dbReference type="GO" id="GO:0000981">
    <property type="term" value="F:DNA-binding transcription factor activity, RNA polymerase II-specific"/>
    <property type="evidence" value="ECO:0000318"/>
    <property type="project" value="GO_Central"/>
</dbReference>
<dbReference type="GO" id="GO:0001227">
    <property type="term" value="F:DNA-binding transcription repressor activity, RNA polymerase II-specific"/>
    <property type="evidence" value="ECO:0000266"/>
    <property type="project" value="RGD"/>
</dbReference>
<dbReference type="GO" id="GO:0000978">
    <property type="term" value="F:RNA polymerase II cis-regulatory region sequence-specific DNA binding"/>
    <property type="evidence" value="ECO:0000266"/>
    <property type="project" value="RGD"/>
</dbReference>
<dbReference type="GO" id="GO:0043565">
    <property type="term" value="F:sequence-specific DNA binding"/>
    <property type="evidence" value="ECO:0000250"/>
    <property type="project" value="UniProtKB"/>
</dbReference>
<dbReference type="GO" id="GO:0008270">
    <property type="term" value="F:zinc ion binding"/>
    <property type="evidence" value="ECO:0007669"/>
    <property type="project" value="UniProtKB-KW"/>
</dbReference>
<dbReference type="GO" id="GO:0001658">
    <property type="term" value="P:branching involved in ureteric bud morphogenesis"/>
    <property type="evidence" value="ECO:0000266"/>
    <property type="project" value="RGD"/>
</dbReference>
<dbReference type="GO" id="GO:0045892">
    <property type="term" value="P:negative regulation of DNA-templated transcription"/>
    <property type="evidence" value="ECO:0000250"/>
    <property type="project" value="UniProtKB"/>
</dbReference>
<dbReference type="GO" id="GO:0000122">
    <property type="term" value="P:negative regulation of transcription by RNA polymerase II"/>
    <property type="evidence" value="ECO:0000266"/>
    <property type="project" value="RGD"/>
</dbReference>
<dbReference type="GO" id="GO:0006355">
    <property type="term" value="P:regulation of DNA-templated transcription"/>
    <property type="evidence" value="ECO:0000318"/>
    <property type="project" value="GO_Central"/>
</dbReference>
<dbReference type="FunFam" id="3.30.160.60:FF:000657">
    <property type="entry name" value="GDNF inducible zinc finger protein 1"/>
    <property type="match status" value="1"/>
</dbReference>
<dbReference type="FunFam" id="3.30.160.60:FF:001563">
    <property type="entry name" value="GDNF inducible zinc finger protein 1"/>
    <property type="match status" value="1"/>
</dbReference>
<dbReference type="FunFam" id="3.30.160.60:FF:001633">
    <property type="entry name" value="GDNF inducible zinc finger protein 1"/>
    <property type="match status" value="1"/>
</dbReference>
<dbReference type="FunFam" id="3.30.710.10:FF:000090">
    <property type="entry name" value="GDNF inducible zinc finger protein 1"/>
    <property type="match status" value="1"/>
</dbReference>
<dbReference type="FunFam" id="3.30.160.60:FF:000322">
    <property type="entry name" value="GDNF-inducible zinc finger protein 1"/>
    <property type="match status" value="1"/>
</dbReference>
<dbReference type="FunFam" id="3.30.160.60:FF:000709">
    <property type="entry name" value="GDNF-inducible zinc finger protein 1"/>
    <property type="match status" value="1"/>
</dbReference>
<dbReference type="FunFam" id="3.30.160.60:FF:003287">
    <property type="entry name" value="Zgc:113343"/>
    <property type="match status" value="1"/>
</dbReference>
<dbReference type="FunFam" id="3.30.160.60:FF:000701">
    <property type="entry name" value="Zinc finger and BTB domain containing 40"/>
    <property type="match status" value="1"/>
</dbReference>
<dbReference type="FunFam" id="3.30.160.60:FF:002343">
    <property type="entry name" value="Zinc finger protein 33A"/>
    <property type="match status" value="1"/>
</dbReference>
<dbReference type="Gene3D" id="3.30.160.60">
    <property type="entry name" value="Classic Zinc Finger"/>
    <property type="match status" value="9"/>
</dbReference>
<dbReference type="Gene3D" id="3.30.710.10">
    <property type="entry name" value="Potassium Channel Kv1.1, Chain A"/>
    <property type="match status" value="1"/>
</dbReference>
<dbReference type="InterPro" id="IPR000210">
    <property type="entry name" value="BTB/POZ_dom"/>
</dbReference>
<dbReference type="InterPro" id="IPR011333">
    <property type="entry name" value="SKP1/BTB/POZ_sf"/>
</dbReference>
<dbReference type="InterPro" id="IPR036236">
    <property type="entry name" value="Znf_C2H2_sf"/>
</dbReference>
<dbReference type="InterPro" id="IPR013087">
    <property type="entry name" value="Znf_C2H2_type"/>
</dbReference>
<dbReference type="PANTHER" id="PTHR24394">
    <property type="entry name" value="ZINC FINGER PROTEIN"/>
    <property type="match status" value="1"/>
</dbReference>
<dbReference type="PANTHER" id="PTHR24394:SF44">
    <property type="entry name" value="ZINC FINGER PROTEIN 271-LIKE"/>
    <property type="match status" value="1"/>
</dbReference>
<dbReference type="Pfam" id="PF00651">
    <property type="entry name" value="BTB"/>
    <property type="match status" value="1"/>
</dbReference>
<dbReference type="Pfam" id="PF00096">
    <property type="entry name" value="zf-C2H2"/>
    <property type="match status" value="8"/>
</dbReference>
<dbReference type="Pfam" id="PF13912">
    <property type="entry name" value="zf-C2H2_6"/>
    <property type="match status" value="1"/>
</dbReference>
<dbReference type="SMART" id="SM00225">
    <property type="entry name" value="BTB"/>
    <property type="match status" value="1"/>
</dbReference>
<dbReference type="SMART" id="SM00355">
    <property type="entry name" value="ZnF_C2H2"/>
    <property type="match status" value="10"/>
</dbReference>
<dbReference type="SUPFAM" id="SSF57667">
    <property type="entry name" value="beta-beta-alpha zinc fingers"/>
    <property type="match status" value="6"/>
</dbReference>
<dbReference type="SUPFAM" id="SSF54695">
    <property type="entry name" value="POZ domain"/>
    <property type="match status" value="1"/>
</dbReference>
<dbReference type="PROSITE" id="PS50097">
    <property type="entry name" value="BTB"/>
    <property type="match status" value="1"/>
</dbReference>
<dbReference type="PROSITE" id="PS00028">
    <property type="entry name" value="ZINC_FINGER_C2H2_1"/>
    <property type="match status" value="10"/>
</dbReference>
<dbReference type="PROSITE" id="PS50157">
    <property type="entry name" value="ZINC_FINGER_C2H2_2"/>
    <property type="match status" value="10"/>
</dbReference>
<sequence>MESGTVLLESKSSPLNLLHEMHELRLLGHLCDVTVIVDYQGVREDFMAHKAVLAATSKFFKEVFLNEKRADGTRTNVYLSEVQVVDFASFLEFVYTARVRVKEDRVQQMLEVAEKLKCLDLSETCLQLKKQMLESVLLELQNFSESQEVEASSGPQVSVTPSSKASVPAGEDAHSNGLVDSSDYPIERLGNGLSPETPSKKCKEKLDKKKDVAKPPFPKIRRASGRLAGKKVFVEIPKKKYTRRLREQQKSAEEAAKNDKCPQDQSPDNERVEAEPASKSEACPASVEREESLQKVEGEKEEEEGKDGEEKKKSNFQCTVCDKAFLYEKSFLKHIKYHHGVATEVVYRCDTCGQTFANRCNLKSHQRHVHSSERHFPCEMCAKKFKRKKDVKRHVLQVHEGGGERHRCGQCGKGLSSKTALRLHERTHTGDKPYGCTKCDAKFSQPSALKTHLRVHTGERPFVCDECGARFTQNHMLIYHKRCHTGERPFMCETCGKSFASKEYLKHHNRIHTGSKPFKCEVCLRTFAQRNSLYQHIKVHTGERPYCCDQCGKQFTQVNALQRHHRIHTGEKPYMCNACGRTFTDKSTLRRHTSIHDKNTPWKSFLVIVDGSPKNDEGQKTEQPDEEYASPKLSDRLLSFGENSHFNNLLEVQGNVPAVQENSSTDTACKAVVSQDALLTTSISALGELTPQTVSMPAHLPSLTNME</sequence>
<feature type="chain" id="PRO_0000409661" description="GDNF-inducible zinc finger protein 1">
    <location>
        <begin position="1"/>
        <end position="707"/>
    </location>
</feature>
<feature type="domain" description="BTB" evidence="2">
    <location>
        <begin position="31"/>
        <end position="103"/>
    </location>
</feature>
<feature type="zinc finger region" description="C2H2-type 1" evidence="3">
    <location>
        <begin position="316"/>
        <end position="338"/>
    </location>
</feature>
<feature type="zinc finger region" description="C2H2-type 2" evidence="3">
    <location>
        <begin position="347"/>
        <end position="370"/>
    </location>
</feature>
<feature type="zinc finger region" description="C2H2-type 3" evidence="3">
    <location>
        <begin position="376"/>
        <end position="399"/>
    </location>
</feature>
<feature type="zinc finger region" description="C2H2-type 4" evidence="3">
    <location>
        <begin position="406"/>
        <end position="428"/>
    </location>
</feature>
<feature type="zinc finger region" description="C2H2-type 5" evidence="3">
    <location>
        <begin position="434"/>
        <end position="456"/>
    </location>
</feature>
<feature type="zinc finger region" description="C2H2-type 6" evidence="3">
    <location>
        <begin position="462"/>
        <end position="484"/>
    </location>
</feature>
<feature type="zinc finger region" description="C2H2-type 7" evidence="3">
    <location>
        <begin position="490"/>
        <end position="512"/>
    </location>
</feature>
<feature type="zinc finger region" description="C2H2-type 8" evidence="3">
    <location>
        <begin position="518"/>
        <end position="540"/>
    </location>
</feature>
<feature type="zinc finger region" description="C2H2-type 9" evidence="3">
    <location>
        <begin position="546"/>
        <end position="568"/>
    </location>
</feature>
<feature type="zinc finger region" description="C2H2-type 10" evidence="3">
    <location>
        <begin position="574"/>
        <end position="596"/>
    </location>
</feature>
<feature type="region of interest" description="Disordered" evidence="4">
    <location>
        <begin position="149"/>
        <end position="221"/>
    </location>
</feature>
<feature type="region of interest" description="Disordered" evidence="4">
    <location>
        <begin position="243"/>
        <end position="309"/>
    </location>
</feature>
<feature type="compositionally biased region" description="Polar residues" evidence="4">
    <location>
        <begin position="149"/>
        <end position="165"/>
    </location>
</feature>
<feature type="compositionally biased region" description="Basic and acidic residues" evidence="4">
    <location>
        <begin position="198"/>
        <end position="213"/>
    </location>
</feature>
<feature type="compositionally biased region" description="Basic and acidic residues" evidence="4">
    <location>
        <begin position="243"/>
        <end position="278"/>
    </location>
</feature>
<feature type="compositionally biased region" description="Basic and acidic residues" evidence="4">
    <location>
        <begin position="287"/>
        <end position="298"/>
    </location>
</feature>
<feature type="modified residue" description="Phosphoserine" evidence="6">
    <location>
        <position position="612"/>
    </location>
</feature>
<accession>D3ZUU2</accession>
<organism>
    <name type="scientific">Rattus norvegicus</name>
    <name type="common">Rat</name>
    <dbReference type="NCBI Taxonomy" id="10116"/>
    <lineage>
        <taxon>Eukaryota</taxon>
        <taxon>Metazoa</taxon>
        <taxon>Chordata</taxon>
        <taxon>Craniata</taxon>
        <taxon>Vertebrata</taxon>
        <taxon>Euteleostomi</taxon>
        <taxon>Mammalia</taxon>
        <taxon>Eutheria</taxon>
        <taxon>Euarchontoglires</taxon>
        <taxon>Glires</taxon>
        <taxon>Rodentia</taxon>
        <taxon>Myomorpha</taxon>
        <taxon>Muroidea</taxon>
        <taxon>Muridae</taxon>
        <taxon>Murinae</taxon>
        <taxon>Rattus</taxon>
    </lineage>
</organism>
<evidence type="ECO:0000250" key="1">
    <source>
        <dbReference type="UniProtKB" id="Q9H116"/>
    </source>
</evidence>
<evidence type="ECO:0000255" key="2">
    <source>
        <dbReference type="PROSITE-ProRule" id="PRU00037"/>
    </source>
</evidence>
<evidence type="ECO:0000255" key="3">
    <source>
        <dbReference type="PROSITE-ProRule" id="PRU00042"/>
    </source>
</evidence>
<evidence type="ECO:0000256" key="4">
    <source>
        <dbReference type="SAM" id="MobiDB-lite"/>
    </source>
</evidence>
<evidence type="ECO:0000305" key="5"/>
<evidence type="ECO:0007744" key="6">
    <source>
    </source>
</evidence>
<gene>
    <name type="primary">Gzf1</name>
    <name type="synonym">Zfp336</name>
</gene>
<name>GZF1_RAT</name>
<reference key="1">
    <citation type="submission" date="2005-09" db="EMBL/GenBank/DDBJ databases">
        <authorList>
            <person name="Mural R.J."/>
            <person name="Adams M.D."/>
            <person name="Myers E.W."/>
            <person name="Smith H.O."/>
            <person name="Venter J.C."/>
        </authorList>
    </citation>
    <scope>NUCLEOTIDE SEQUENCE [LARGE SCALE GENOMIC DNA]</scope>
</reference>
<reference key="2">
    <citation type="journal article" date="2012" name="Nat. Commun.">
        <title>Quantitative maps of protein phosphorylation sites across 14 different rat organs and tissues.</title>
        <authorList>
            <person name="Lundby A."/>
            <person name="Secher A."/>
            <person name="Lage K."/>
            <person name="Nordsborg N.B."/>
            <person name="Dmytriyev A."/>
            <person name="Lundby C."/>
            <person name="Olsen J.V."/>
        </authorList>
    </citation>
    <scope>PHOSPHORYLATION [LARGE SCALE ANALYSIS] AT SER-612</scope>
    <scope>IDENTIFICATION BY MASS SPECTROMETRY [LARGE SCALE ANALYSIS]</scope>
</reference>
<proteinExistence type="evidence at protein level"/>
<comment type="function">
    <text evidence="1">Transcriptional repressor that binds the GZF1 responsive element (GRE) (consensus: 5'-TGCGCN[TG][CA]TATA-3'). May be regulating VSX2/HOX10 expression.</text>
</comment>
<comment type="subunit">
    <text evidence="1">Interacts with NCL.</text>
</comment>
<comment type="subcellular location">
    <subcellularLocation>
        <location evidence="1">Cytoplasm</location>
    </subcellularLocation>
    <subcellularLocation>
        <location evidence="1">Nucleus</location>
        <location evidence="1">Nucleoplasm</location>
    </subcellularLocation>
    <subcellularLocation>
        <location evidence="1">Nucleus</location>
        <location evidence="1">Nucleolus</location>
    </subcellularLocation>
    <text evidence="1">Nuclear localization depends upon NCL.</text>
</comment>
<comment type="similarity">
    <text evidence="5">Belongs to the krueppel C2H2-type zinc-finger protein family.</text>
</comment>
<keyword id="KW-0963">Cytoplasm</keyword>
<keyword id="KW-0238">DNA-binding</keyword>
<keyword id="KW-0479">Metal-binding</keyword>
<keyword id="KW-0539">Nucleus</keyword>
<keyword id="KW-0597">Phosphoprotein</keyword>
<keyword id="KW-1185">Reference proteome</keyword>
<keyword id="KW-0677">Repeat</keyword>
<keyword id="KW-0678">Repressor</keyword>
<keyword id="KW-0804">Transcription</keyword>
<keyword id="KW-0805">Transcription regulation</keyword>
<keyword id="KW-0862">Zinc</keyword>
<keyword id="KW-0863">Zinc-finger</keyword>